<organism>
    <name type="scientific">Acidovorax ebreus (strain TPSY)</name>
    <name type="common">Diaphorobacter sp. (strain TPSY)</name>
    <dbReference type="NCBI Taxonomy" id="535289"/>
    <lineage>
        <taxon>Bacteria</taxon>
        <taxon>Pseudomonadati</taxon>
        <taxon>Pseudomonadota</taxon>
        <taxon>Betaproteobacteria</taxon>
        <taxon>Burkholderiales</taxon>
        <taxon>Comamonadaceae</taxon>
        <taxon>Diaphorobacter</taxon>
    </lineage>
</organism>
<dbReference type="EMBL" id="CP001392">
    <property type="protein sequence ID" value="ACM34676.1"/>
    <property type="molecule type" value="Genomic_DNA"/>
</dbReference>
<dbReference type="RefSeq" id="WP_015914493.1">
    <property type="nucleotide sequence ID" value="NC_011992.1"/>
</dbReference>
<dbReference type="SMR" id="B9MH48"/>
<dbReference type="GeneID" id="84683780"/>
<dbReference type="KEGG" id="dia:Dtpsy_3247"/>
<dbReference type="eggNOG" id="COG0222">
    <property type="taxonomic scope" value="Bacteria"/>
</dbReference>
<dbReference type="HOGENOM" id="CLU_086499_3_2_4"/>
<dbReference type="Proteomes" id="UP000000450">
    <property type="component" value="Chromosome"/>
</dbReference>
<dbReference type="GO" id="GO:0022625">
    <property type="term" value="C:cytosolic large ribosomal subunit"/>
    <property type="evidence" value="ECO:0007669"/>
    <property type="project" value="TreeGrafter"/>
</dbReference>
<dbReference type="GO" id="GO:0003729">
    <property type="term" value="F:mRNA binding"/>
    <property type="evidence" value="ECO:0007669"/>
    <property type="project" value="TreeGrafter"/>
</dbReference>
<dbReference type="GO" id="GO:0003735">
    <property type="term" value="F:structural constituent of ribosome"/>
    <property type="evidence" value="ECO:0007669"/>
    <property type="project" value="InterPro"/>
</dbReference>
<dbReference type="GO" id="GO:0006412">
    <property type="term" value="P:translation"/>
    <property type="evidence" value="ECO:0007669"/>
    <property type="project" value="UniProtKB-UniRule"/>
</dbReference>
<dbReference type="CDD" id="cd00387">
    <property type="entry name" value="Ribosomal_L7_L12"/>
    <property type="match status" value="1"/>
</dbReference>
<dbReference type="FunFam" id="3.30.1390.10:FF:000001">
    <property type="entry name" value="50S ribosomal protein L7/L12"/>
    <property type="match status" value="1"/>
</dbReference>
<dbReference type="Gene3D" id="3.30.1390.10">
    <property type="match status" value="1"/>
</dbReference>
<dbReference type="Gene3D" id="1.20.5.710">
    <property type="entry name" value="Single helix bin"/>
    <property type="match status" value="1"/>
</dbReference>
<dbReference type="HAMAP" id="MF_00368">
    <property type="entry name" value="Ribosomal_bL12"/>
    <property type="match status" value="1"/>
</dbReference>
<dbReference type="InterPro" id="IPR000206">
    <property type="entry name" value="Ribosomal_bL12"/>
</dbReference>
<dbReference type="InterPro" id="IPR013823">
    <property type="entry name" value="Ribosomal_bL12_C"/>
</dbReference>
<dbReference type="InterPro" id="IPR014719">
    <property type="entry name" value="Ribosomal_bL12_C/ClpS-like"/>
</dbReference>
<dbReference type="InterPro" id="IPR008932">
    <property type="entry name" value="Ribosomal_bL12_oligo"/>
</dbReference>
<dbReference type="InterPro" id="IPR036235">
    <property type="entry name" value="Ribosomal_bL12_oligo_N_sf"/>
</dbReference>
<dbReference type="NCBIfam" id="TIGR00855">
    <property type="entry name" value="L12"/>
    <property type="match status" value="1"/>
</dbReference>
<dbReference type="PANTHER" id="PTHR45987">
    <property type="entry name" value="39S RIBOSOMAL PROTEIN L12"/>
    <property type="match status" value="1"/>
</dbReference>
<dbReference type="PANTHER" id="PTHR45987:SF4">
    <property type="entry name" value="LARGE RIBOSOMAL SUBUNIT PROTEIN BL12M"/>
    <property type="match status" value="1"/>
</dbReference>
<dbReference type="Pfam" id="PF00542">
    <property type="entry name" value="Ribosomal_L12"/>
    <property type="match status" value="1"/>
</dbReference>
<dbReference type="Pfam" id="PF16320">
    <property type="entry name" value="Ribosomal_L12_N"/>
    <property type="match status" value="1"/>
</dbReference>
<dbReference type="SUPFAM" id="SSF54736">
    <property type="entry name" value="ClpS-like"/>
    <property type="match status" value="1"/>
</dbReference>
<dbReference type="SUPFAM" id="SSF48300">
    <property type="entry name" value="Ribosomal protein L7/12, oligomerisation (N-terminal) domain"/>
    <property type="match status" value="1"/>
</dbReference>
<gene>
    <name evidence="1" type="primary">rplL</name>
    <name type="ordered locus">Dtpsy_3247</name>
</gene>
<protein>
    <recommendedName>
        <fullName evidence="1">Large ribosomal subunit protein bL12</fullName>
    </recommendedName>
    <alternativeName>
        <fullName evidence="2">50S ribosomal protein L7/L12</fullName>
    </alternativeName>
</protein>
<feature type="chain" id="PRO_1000195791" description="Large ribosomal subunit protein bL12">
    <location>
        <begin position="1"/>
        <end position="126"/>
    </location>
</feature>
<keyword id="KW-1185">Reference proteome</keyword>
<keyword id="KW-0687">Ribonucleoprotein</keyword>
<keyword id="KW-0689">Ribosomal protein</keyword>
<accession>B9MH48</accession>
<sequence>MAFDKDAFLTALDSMTVLELNDLVKAIEEKFGVSAAAMAAPAAGGAAGGGAAAAEEKTEFNVVLADAGANKVAVIKAVREITGLGLKEAKDLVDGAPKNVKEGIAKADAEAAVKKLVEAGAKAELK</sequence>
<name>RL7_ACIET</name>
<comment type="function">
    <text evidence="1">Forms part of the ribosomal stalk which helps the ribosome interact with GTP-bound translation factors. Is thus essential for accurate translation.</text>
</comment>
<comment type="subunit">
    <text evidence="1">Homodimer. Part of the ribosomal stalk of the 50S ribosomal subunit. Forms a multimeric L10(L12)X complex, where L10 forms an elongated spine to which 2 to 4 L12 dimers bind in a sequential fashion. Binds GTP-bound translation factors.</text>
</comment>
<comment type="similarity">
    <text evidence="1">Belongs to the bacterial ribosomal protein bL12 family.</text>
</comment>
<evidence type="ECO:0000255" key="1">
    <source>
        <dbReference type="HAMAP-Rule" id="MF_00368"/>
    </source>
</evidence>
<evidence type="ECO:0000305" key="2"/>
<reference key="1">
    <citation type="submission" date="2009-01" db="EMBL/GenBank/DDBJ databases">
        <title>Complete sequence of Diaphorobacter sp. TPSY.</title>
        <authorList>
            <consortium name="US DOE Joint Genome Institute"/>
            <person name="Lucas S."/>
            <person name="Copeland A."/>
            <person name="Lapidus A."/>
            <person name="Glavina del Rio T."/>
            <person name="Tice H."/>
            <person name="Bruce D."/>
            <person name="Goodwin L."/>
            <person name="Pitluck S."/>
            <person name="Chertkov O."/>
            <person name="Brettin T."/>
            <person name="Detter J.C."/>
            <person name="Han C."/>
            <person name="Larimer F."/>
            <person name="Land M."/>
            <person name="Hauser L."/>
            <person name="Kyrpides N."/>
            <person name="Mikhailova N."/>
            <person name="Coates J.D."/>
        </authorList>
    </citation>
    <scope>NUCLEOTIDE SEQUENCE [LARGE SCALE GENOMIC DNA]</scope>
    <source>
        <strain>TPSY</strain>
    </source>
</reference>
<proteinExistence type="inferred from homology"/>